<dbReference type="EC" id="4.1.1.65" evidence="1"/>
<dbReference type="EMBL" id="CP000302">
    <property type="protein sequence ID" value="ABE56490.1"/>
    <property type="molecule type" value="Genomic_DNA"/>
</dbReference>
<dbReference type="RefSeq" id="WP_011497635.1">
    <property type="nucleotide sequence ID" value="NC_007954.1"/>
</dbReference>
<dbReference type="SMR" id="Q12J86"/>
<dbReference type="STRING" id="318161.Sden_3214"/>
<dbReference type="KEGG" id="sdn:Sden_3214"/>
<dbReference type="eggNOG" id="COG0688">
    <property type="taxonomic scope" value="Bacteria"/>
</dbReference>
<dbReference type="HOGENOM" id="CLU_029061_4_1_6"/>
<dbReference type="OrthoDB" id="9802030at2"/>
<dbReference type="UniPathway" id="UPA00558">
    <property type="reaction ID" value="UER00616"/>
</dbReference>
<dbReference type="Proteomes" id="UP000001982">
    <property type="component" value="Chromosome"/>
</dbReference>
<dbReference type="GO" id="GO:0005886">
    <property type="term" value="C:plasma membrane"/>
    <property type="evidence" value="ECO:0007669"/>
    <property type="project" value="UniProtKB-SubCell"/>
</dbReference>
<dbReference type="GO" id="GO:0004609">
    <property type="term" value="F:phosphatidylserine decarboxylase activity"/>
    <property type="evidence" value="ECO:0007669"/>
    <property type="project" value="UniProtKB-UniRule"/>
</dbReference>
<dbReference type="GO" id="GO:0006646">
    <property type="term" value="P:phosphatidylethanolamine biosynthetic process"/>
    <property type="evidence" value="ECO:0007669"/>
    <property type="project" value="UniProtKB-UniRule"/>
</dbReference>
<dbReference type="HAMAP" id="MF_00662">
    <property type="entry name" value="PS_decarb_PSD_B_type1"/>
    <property type="match status" value="1"/>
</dbReference>
<dbReference type="InterPro" id="IPR003817">
    <property type="entry name" value="PS_Dcarbxylase"/>
</dbReference>
<dbReference type="InterPro" id="IPR033177">
    <property type="entry name" value="PSD-B"/>
</dbReference>
<dbReference type="InterPro" id="IPR033178">
    <property type="entry name" value="PSD_type1_pro"/>
</dbReference>
<dbReference type="NCBIfam" id="TIGR00163">
    <property type="entry name" value="PS_decarb"/>
    <property type="match status" value="1"/>
</dbReference>
<dbReference type="PANTHER" id="PTHR10067">
    <property type="entry name" value="PHOSPHATIDYLSERINE DECARBOXYLASE"/>
    <property type="match status" value="1"/>
</dbReference>
<dbReference type="PANTHER" id="PTHR10067:SF6">
    <property type="entry name" value="PHOSPHATIDYLSERINE DECARBOXYLASE PROENZYME, MITOCHONDRIAL"/>
    <property type="match status" value="1"/>
</dbReference>
<dbReference type="Pfam" id="PF02666">
    <property type="entry name" value="PS_Dcarbxylase"/>
    <property type="match status" value="1"/>
</dbReference>
<feature type="chain" id="PRO_0000262149" description="Phosphatidylserine decarboxylase beta chain" evidence="1">
    <location>
        <begin position="1"/>
        <end position="251"/>
    </location>
</feature>
<feature type="chain" id="PRO_0000262150" description="Phosphatidylserine decarboxylase alpha chain" evidence="1">
    <location>
        <begin position="252"/>
        <end position="289"/>
    </location>
</feature>
<feature type="active site" description="Charge relay system; for autoendoproteolytic cleavage activity" evidence="1">
    <location>
        <position position="89"/>
    </location>
</feature>
<feature type="active site" description="Charge relay system; for autoendoproteolytic cleavage activity" evidence="1">
    <location>
        <position position="146"/>
    </location>
</feature>
<feature type="active site" description="Charge relay system; for autoendoproteolytic cleavage activity" evidence="1">
    <location>
        <position position="252"/>
    </location>
</feature>
<feature type="active site" description="Schiff-base intermediate with substrate; via pyruvic acid; for decarboxylase activity" evidence="1">
    <location>
        <position position="252"/>
    </location>
</feature>
<feature type="site" description="Cleavage (non-hydrolytic); by autocatalysis" evidence="1">
    <location>
        <begin position="251"/>
        <end position="252"/>
    </location>
</feature>
<feature type="modified residue" description="Pyruvic acid (Ser); by autocatalysis" evidence="1">
    <location>
        <position position="252"/>
    </location>
</feature>
<reference key="1">
    <citation type="submission" date="2006-03" db="EMBL/GenBank/DDBJ databases">
        <title>Complete sequence of Shewanella denitrificans OS217.</title>
        <authorList>
            <consortium name="US DOE Joint Genome Institute"/>
            <person name="Copeland A."/>
            <person name="Lucas S."/>
            <person name="Lapidus A."/>
            <person name="Barry K."/>
            <person name="Detter J.C."/>
            <person name="Glavina del Rio T."/>
            <person name="Hammon N."/>
            <person name="Israni S."/>
            <person name="Dalin E."/>
            <person name="Tice H."/>
            <person name="Pitluck S."/>
            <person name="Brettin T."/>
            <person name="Bruce D."/>
            <person name="Han C."/>
            <person name="Tapia R."/>
            <person name="Gilna P."/>
            <person name="Kiss H."/>
            <person name="Schmutz J."/>
            <person name="Larimer F."/>
            <person name="Land M."/>
            <person name="Hauser L."/>
            <person name="Kyrpides N."/>
            <person name="Lykidis A."/>
            <person name="Richardson P."/>
        </authorList>
    </citation>
    <scope>NUCLEOTIDE SEQUENCE [LARGE SCALE GENOMIC DNA]</scope>
    <source>
        <strain>OS217 / ATCC BAA-1090 / DSM 15013</strain>
    </source>
</reference>
<keyword id="KW-1003">Cell membrane</keyword>
<keyword id="KW-0210">Decarboxylase</keyword>
<keyword id="KW-0444">Lipid biosynthesis</keyword>
<keyword id="KW-0443">Lipid metabolism</keyword>
<keyword id="KW-0456">Lyase</keyword>
<keyword id="KW-0472">Membrane</keyword>
<keyword id="KW-0594">Phospholipid biosynthesis</keyword>
<keyword id="KW-1208">Phospholipid metabolism</keyword>
<keyword id="KW-0670">Pyruvate</keyword>
<keyword id="KW-1185">Reference proteome</keyword>
<keyword id="KW-0865">Zymogen</keyword>
<sequence length="289" mass="31277">MDSVKIALQYIMPKHLVSRLVGKFAAAKAGALTQAFINWFIKQYKVDMSEAAQSDPKAYASFNDFFTRALKDGIRPLCQEDGIMVHPVDGAVSQRGPIEAGQIVQAKGHHYSSVALLGGDEKDAARFDNGDFATIYLAPKDYHRIHMPITGTLSKMIYVPGELFSVNPLTAQNVPGLFARNERVVAIFETQVGPLAMVLVGATIVASIETVWAGTVTPPAGKQVFTWEYPTTGSDALTLEKGAEMGRFKLGSTVVMLFAQDAIDTFAAGVDPGETTRMGQKFANLNKSK</sequence>
<organism>
    <name type="scientific">Shewanella denitrificans (strain OS217 / ATCC BAA-1090 / DSM 15013)</name>
    <dbReference type="NCBI Taxonomy" id="318161"/>
    <lineage>
        <taxon>Bacteria</taxon>
        <taxon>Pseudomonadati</taxon>
        <taxon>Pseudomonadota</taxon>
        <taxon>Gammaproteobacteria</taxon>
        <taxon>Alteromonadales</taxon>
        <taxon>Shewanellaceae</taxon>
        <taxon>Shewanella</taxon>
    </lineage>
</organism>
<comment type="function">
    <text evidence="1">Catalyzes the formation of phosphatidylethanolamine (PtdEtn) from phosphatidylserine (PtdSer).</text>
</comment>
<comment type="catalytic activity">
    <reaction evidence="1">
        <text>a 1,2-diacyl-sn-glycero-3-phospho-L-serine + H(+) = a 1,2-diacyl-sn-glycero-3-phosphoethanolamine + CO2</text>
        <dbReference type="Rhea" id="RHEA:20828"/>
        <dbReference type="ChEBI" id="CHEBI:15378"/>
        <dbReference type="ChEBI" id="CHEBI:16526"/>
        <dbReference type="ChEBI" id="CHEBI:57262"/>
        <dbReference type="ChEBI" id="CHEBI:64612"/>
        <dbReference type="EC" id="4.1.1.65"/>
    </reaction>
</comment>
<comment type="cofactor">
    <cofactor evidence="1">
        <name>pyruvate</name>
        <dbReference type="ChEBI" id="CHEBI:15361"/>
    </cofactor>
    <text evidence="1">Binds 1 pyruvoyl group covalently per subunit.</text>
</comment>
<comment type="pathway">
    <text evidence="1">Phospholipid metabolism; phosphatidylethanolamine biosynthesis; phosphatidylethanolamine from CDP-diacylglycerol: step 2/2.</text>
</comment>
<comment type="subunit">
    <text evidence="1">Heterodimer of a large membrane-associated beta subunit and a small pyruvoyl-containing alpha subunit.</text>
</comment>
<comment type="subcellular location">
    <subcellularLocation>
        <location evidence="1">Cell membrane</location>
        <topology evidence="1">Peripheral membrane protein</topology>
    </subcellularLocation>
</comment>
<comment type="PTM">
    <text evidence="1">Is synthesized initially as an inactive proenzyme. Formation of the active enzyme involves a self-maturation process in which the active site pyruvoyl group is generated from an internal serine residue via an autocatalytic post-translational modification. Two non-identical subunits are generated from the proenzyme in this reaction, and the pyruvate is formed at the N-terminus of the alpha chain, which is derived from the carboxyl end of the proenzyme. The autoendoproteolytic cleavage occurs by a canonical serine protease mechanism, in which the side chain hydroxyl group of the serine supplies its oxygen atom to form the C-terminus of the beta chain, while the remainder of the serine residue undergoes an oxidative deamination to produce ammonia and the pyruvoyl prosthetic group on the alpha chain. During this reaction, the Ser that is part of the protease active site of the proenzyme becomes the pyruvoyl prosthetic group, which constitutes an essential element of the active site of the mature decarboxylase.</text>
</comment>
<comment type="similarity">
    <text evidence="1">Belongs to the phosphatidylserine decarboxylase family. PSD-B subfamily. Prokaryotic type I sub-subfamily.</text>
</comment>
<protein>
    <recommendedName>
        <fullName evidence="1">Phosphatidylserine decarboxylase proenzyme</fullName>
        <ecNumber evidence="1">4.1.1.65</ecNumber>
    </recommendedName>
    <component>
        <recommendedName>
            <fullName evidence="1">Phosphatidylserine decarboxylase alpha chain</fullName>
        </recommendedName>
    </component>
    <component>
        <recommendedName>
            <fullName evidence="1">Phosphatidylserine decarboxylase beta chain</fullName>
        </recommendedName>
    </component>
</protein>
<name>PSD_SHEDO</name>
<proteinExistence type="inferred from homology"/>
<gene>
    <name evidence="1" type="primary">psd</name>
    <name type="ordered locus">Sden_3214</name>
</gene>
<evidence type="ECO:0000255" key="1">
    <source>
        <dbReference type="HAMAP-Rule" id="MF_00662"/>
    </source>
</evidence>
<accession>Q12J86</accession>